<keyword id="KW-0150">Chloroplast</keyword>
<keyword id="KW-0934">Plastid</keyword>
<keyword id="KW-0687">Ribonucleoprotein</keyword>
<keyword id="KW-0689">Ribosomal protein</keyword>
<reference key="1">
    <citation type="journal article" date="2005" name="BMC Biol.">
        <title>The complete chloroplast DNA sequences of the charophycean green algae Staurastrum and Zygnema reveal that the chloroplast genome underwent extensive changes during the evolution of the Zygnematales.</title>
        <authorList>
            <person name="Turmel M."/>
            <person name="Otis C."/>
            <person name="Lemieux C."/>
        </authorList>
    </citation>
    <scope>NUCLEOTIDE SEQUENCE [LARGE SCALE GENOMIC DNA]</scope>
</reference>
<evidence type="ECO:0000250" key="1"/>
<evidence type="ECO:0000255" key="2">
    <source>
        <dbReference type="HAMAP-Rule" id="MF_01320"/>
    </source>
</evidence>
<evidence type="ECO:0000256" key="3">
    <source>
        <dbReference type="SAM" id="MobiDB-lite"/>
    </source>
</evidence>
<evidence type="ECO:0000305" key="4"/>
<accession>Q32RN8</accession>
<sequence length="277" mass="30643">MGIRSYKAYTPGTRNRSVSQFEEIVQSKPEKQLTSGQHRKKGRNNRGVITSRHRGGGHKRLYRHIDFKRDKYGMLGRIVSIEYDPNRNARICLISYQDGEKRYILHPRGISIGDQILSDTHAPISPGNALPLTNMPLGTTIHNIELQPGKGGQVARAAGAIAKIIAKEGKFATLRLPSGEVRLVLQQCLATIGQVGNVDANNQSIGKAGSKRWLGRRPTVRGVVMNAADHPHGGGEGRAPIGRKRPLTPWGRPTLGRKSRSRHKYSEALILRRRKNA</sequence>
<organism>
    <name type="scientific">Zygnema circumcarinatum</name>
    <name type="common">Green alga</name>
    <dbReference type="NCBI Taxonomy" id="35869"/>
    <lineage>
        <taxon>Eukaryota</taxon>
        <taxon>Viridiplantae</taxon>
        <taxon>Streptophyta</taxon>
        <taxon>Zygnematophyceae</taxon>
        <taxon>Zygnematophycidae</taxon>
        <taxon>Zygnematales</taxon>
        <taxon>Zygnemataceae</taxon>
        <taxon>Zygnema</taxon>
    </lineage>
</organism>
<name>RK2_ZYGCR</name>
<dbReference type="EMBL" id="AY958086">
    <property type="protein sequence ID" value="AAX45854.1"/>
    <property type="molecule type" value="Genomic_DNA"/>
</dbReference>
<dbReference type="RefSeq" id="YP_636488.1">
    <property type="nucleotide sequence ID" value="NC_008117.1"/>
</dbReference>
<dbReference type="SMR" id="Q32RN8"/>
<dbReference type="GeneID" id="4108174"/>
<dbReference type="GO" id="GO:0009507">
    <property type="term" value="C:chloroplast"/>
    <property type="evidence" value="ECO:0007669"/>
    <property type="project" value="UniProtKB-SubCell"/>
</dbReference>
<dbReference type="GO" id="GO:0005762">
    <property type="term" value="C:mitochondrial large ribosomal subunit"/>
    <property type="evidence" value="ECO:0007669"/>
    <property type="project" value="TreeGrafter"/>
</dbReference>
<dbReference type="GO" id="GO:0019843">
    <property type="term" value="F:rRNA binding"/>
    <property type="evidence" value="ECO:0007669"/>
    <property type="project" value="UniProtKB-UniRule"/>
</dbReference>
<dbReference type="GO" id="GO:0003735">
    <property type="term" value="F:structural constituent of ribosome"/>
    <property type="evidence" value="ECO:0007669"/>
    <property type="project" value="InterPro"/>
</dbReference>
<dbReference type="GO" id="GO:0016740">
    <property type="term" value="F:transferase activity"/>
    <property type="evidence" value="ECO:0007669"/>
    <property type="project" value="InterPro"/>
</dbReference>
<dbReference type="GO" id="GO:0032543">
    <property type="term" value="P:mitochondrial translation"/>
    <property type="evidence" value="ECO:0007669"/>
    <property type="project" value="TreeGrafter"/>
</dbReference>
<dbReference type="FunFam" id="2.30.30.30:FF:000001">
    <property type="entry name" value="50S ribosomal protein L2"/>
    <property type="match status" value="1"/>
</dbReference>
<dbReference type="FunFam" id="2.40.50.140:FF:000003">
    <property type="entry name" value="50S ribosomal protein L2"/>
    <property type="match status" value="1"/>
</dbReference>
<dbReference type="FunFam" id="4.10.950.10:FF:000001">
    <property type="entry name" value="50S ribosomal protein L2"/>
    <property type="match status" value="1"/>
</dbReference>
<dbReference type="Gene3D" id="2.30.30.30">
    <property type="match status" value="1"/>
</dbReference>
<dbReference type="Gene3D" id="2.40.50.140">
    <property type="entry name" value="Nucleic acid-binding proteins"/>
    <property type="match status" value="1"/>
</dbReference>
<dbReference type="Gene3D" id="4.10.950.10">
    <property type="entry name" value="Ribosomal protein L2, domain 3"/>
    <property type="match status" value="1"/>
</dbReference>
<dbReference type="HAMAP" id="MF_01320_B">
    <property type="entry name" value="Ribosomal_uL2_B"/>
    <property type="match status" value="1"/>
</dbReference>
<dbReference type="InterPro" id="IPR012340">
    <property type="entry name" value="NA-bd_OB-fold"/>
</dbReference>
<dbReference type="InterPro" id="IPR014722">
    <property type="entry name" value="Rib_uL2_dom2"/>
</dbReference>
<dbReference type="InterPro" id="IPR002171">
    <property type="entry name" value="Ribosomal_uL2"/>
</dbReference>
<dbReference type="InterPro" id="IPR005880">
    <property type="entry name" value="Ribosomal_uL2_bac/org-type"/>
</dbReference>
<dbReference type="InterPro" id="IPR022669">
    <property type="entry name" value="Ribosomal_uL2_C"/>
</dbReference>
<dbReference type="InterPro" id="IPR022671">
    <property type="entry name" value="Ribosomal_uL2_CS"/>
</dbReference>
<dbReference type="InterPro" id="IPR014726">
    <property type="entry name" value="Ribosomal_uL2_dom3"/>
</dbReference>
<dbReference type="InterPro" id="IPR022666">
    <property type="entry name" value="Ribosomal_uL2_RNA-bd_dom"/>
</dbReference>
<dbReference type="InterPro" id="IPR008991">
    <property type="entry name" value="Translation_prot_SH3-like_sf"/>
</dbReference>
<dbReference type="NCBIfam" id="TIGR01171">
    <property type="entry name" value="rplB_bact"/>
    <property type="match status" value="1"/>
</dbReference>
<dbReference type="PANTHER" id="PTHR13691:SF5">
    <property type="entry name" value="LARGE RIBOSOMAL SUBUNIT PROTEIN UL2M"/>
    <property type="match status" value="1"/>
</dbReference>
<dbReference type="PANTHER" id="PTHR13691">
    <property type="entry name" value="RIBOSOMAL PROTEIN L2"/>
    <property type="match status" value="1"/>
</dbReference>
<dbReference type="Pfam" id="PF00181">
    <property type="entry name" value="Ribosomal_L2"/>
    <property type="match status" value="1"/>
</dbReference>
<dbReference type="Pfam" id="PF03947">
    <property type="entry name" value="Ribosomal_L2_C"/>
    <property type="match status" value="1"/>
</dbReference>
<dbReference type="PIRSF" id="PIRSF002158">
    <property type="entry name" value="Ribosomal_L2"/>
    <property type="match status" value="1"/>
</dbReference>
<dbReference type="SMART" id="SM01383">
    <property type="entry name" value="Ribosomal_L2"/>
    <property type="match status" value="1"/>
</dbReference>
<dbReference type="SMART" id="SM01382">
    <property type="entry name" value="Ribosomal_L2_C"/>
    <property type="match status" value="1"/>
</dbReference>
<dbReference type="SUPFAM" id="SSF50249">
    <property type="entry name" value="Nucleic acid-binding proteins"/>
    <property type="match status" value="1"/>
</dbReference>
<dbReference type="SUPFAM" id="SSF50104">
    <property type="entry name" value="Translation proteins SH3-like domain"/>
    <property type="match status" value="1"/>
</dbReference>
<dbReference type="PROSITE" id="PS00467">
    <property type="entry name" value="RIBOSOMAL_L2"/>
    <property type="match status" value="1"/>
</dbReference>
<feature type="chain" id="PRO_0000237288" description="Large ribosomal subunit protein uL2c">
    <location>
        <begin position="1"/>
        <end position="277"/>
    </location>
</feature>
<feature type="region of interest" description="Disordered" evidence="3">
    <location>
        <begin position="24"/>
        <end position="57"/>
    </location>
</feature>
<feature type="region of interest" description="Disordered" evidence="3">
    <location>
        <begin position="226"/>
        <end position="266"/>
    </location>
</feature>
<proteinExistence type="inferred from homology"/>
<geneLocation type="chloroplast"/>
<gene>
    <name type="primary">rpl2</name>
</gene>
<comment type="subunit">
    <text evidence="1">Part of the 50S ribosomal subunit.</text>
</comment>
<comment type="subcellular location">
    <subcellularLocation>
        <location>Plastid</location>
        <location>Chloroplast</location>
    </subcellularLocation>
</comment>
<comment type="similarity">
    <text evidence="4">Belongs to the universal ribosomal protein uL2 family.</text>
</comment>
<protein>
    <recommendedName>
        <fullName evidence="2">Large ribosomal subunit protein uL2c</fullName>
    </recommendedName>
    <alternativeName>
        <fullName evidence="4">50S ribosomal protein L2, chloroplastic</fullName>
    </alternativeName>
</protein>